<keyword id="KW-0143">Chaperone</keyword>
<keyword id="KW-0963">Cytoplasm</keyword>
<keyword id="KW-1015">Disulfide bond</keyword>
<keyword id="KW-0676">Redox-active center</keyword>
<keyword id="KW-0862">Zinc</keyword>
<sequence length="291" mass="31964">MKDYLVKALAFDGEVRAYSVRTTNMVSEAQRRHDTWRTASAALGRSLTAGAMMGAMLKGEQKLTIKVEGNGPIGPIVIDAHANGDVRGYVTNPHVDFESTEQGKLRVYQAVGTEGNVTVIKDIGMREPFIGQSPIVSGELGEDFTYYFAVSEQTPSSVGVGVLVNGDDSILAAGGFILQIMPGAQEETISFIEERLKKIPPVSTMIEKGLSPEGILNEILGEENVKVLETMDVQFNCTCSRERIESVLISLGKAELEQIRGEEEETEVHCHFCNERYKFSKDDIKQLIETL</sequence>
<comment type="function">
    <text evidence="1">Redox regulated molecular chaperone. Protects both thermally unfolding and oxidatively damaged proteins from irreversible aggregation. Plays an important role in the bacterial defense system toward oxidative stress.</text>
</comment>
<comment type="subcellular location">
    <subcellularLocation>
        <location evidence="1">Cytoplasm</location>
    </subcellularLocation>
</comment>
<comment type="PTM">
    <text evidence="1">Under oxidizing conditions two disulfide bonds are formed involving the reactive cysteines. Under reducing conditions zinc is bound to the reactive cysteines and the protein is inactive.</text>
</comment>
<comment type="similarity">
    <text evidence="1">Belongs to the HSP33 family.</text>
</comment>
<gene>
    <name evidence="1" type="primary">hslO</name>
    <name type="ordered locus">Bcer98_0062</name>
</gene>
<evidence type="ECO:0000255" key="1">
    <source>
        <dbReference type="HAMAP-Rule" id="MF_00117"/>
    </source>
</evidence>
<dbReference type="EMBL" id="CP000764">
    <property type="protein sequence ID" value="ABS20437.1"/>
    <property type="molecule type" value="Genomic_DNA"/>
</dbReference>
<dbReference type="RefSeq" id="WP_011983206.1">
    <property type="nucleotide sequence ID" value="NC_009674.1"/>
</dbReference>
<dbReference type="SMR" id="A7GJX9"/>
<dbReference type="STRING" id="315749.Bcer98_0062"/>
<dbReference type="GeneID" id="33895368"/>
<dbReference type="KEGG" id="bcy:Bcer98_0062"/>
<dbReference type="eggNOG" id="COG1281">
    <property type="taxonomic scope" value="Bacteria"/>
</dbReference>
<dbReference type="HOGENOM" id="CLU_054493_1_0_9"/>
<dbReference type="OrthoDB" id="9776534at2"/>
<dbReference type="Proteomes" id="UP000002300">
    <property type="component" value="Chromosome"/>
</dbReference>
<dbReference type="GO" id="GO:0005737">
    <property type="term" value="C:cytoplasm"/>
    <property type="evidence" value="ECO:0007669"/>
    <property type="project" value="UniProtKB-SubCell"/>
</dbReference>
<dbReference type="GO" id="GO:0044183">
    <property type="term" value="F:protein folding chaperone"/>
    <property type="evidence" value="ECO:0007669"/>
    <property type="project" value="TreeGrafter"/>
</dbReference>
<dbReference type="GO" id="GO:0051082">
    <property type="term" value="F:unfolded protein binding"/>
    <property type="evidence" value="ECO:0007669"/>
    <property type="project" value="UniProtKB-UniRule"/>
</dbReference>
<dbReference type="GO" id="GO:0042026">
    <property type="term" value="P:protein refolding"/>
    <property type="evidence" value="ECO:0007669"/>
    <property type="project" value="TreeGrafter"/>
</dbReference>
<dbReference type="CDD" id="cd00498">
    <property type="entry name" value="Hsp33"/>
    <property type="match status" value="1"/>
</dbReference>
<dbReference type="Gene3D" id="3.55.30.10">
    <property type="entry name" value="Hsp33 domain"/>
    <property type="match status" value="1"/>
</dbReference>
<dbReference type="Gene3D" id="3.90.1280.10">
    <property type="entry name" value="HSP33 redox switch-like"/>
    <property type="match status" value="1"/>
</dbReference>
<dbReference type="HAMAP" id="MF_00117">
    <property type="entry name" value="HslO"/>
    <property type="match status" value="1"/>
</dbReference>
<dbReference type="InterPro" id="IPR000397">
    <property type="entry name" value="Heat_shock_Hsp33"/>
</dbReference>
<dbReference type="InterPro" id="IPR016154">
    <property type="entry name" value="Heat_shock_Hsp33_C"/>
</dbReference>
<dbReference type="InterPro" id="IPR016153">
    <property type="entry name" value="Heat_shock_Hsp33_N"/>
</dbReference>
<dbReference type="NCBIfam" id="NF001033">
    <property type="entry name" value="PRK00114.1"/>
    <property type="match status" value="1"/>
</dbReference>
<dbReference type="PANTHER" id="PTHR30111">
    <property type="entry name" value="33 KDA CHAPERONIN"/>
    <property type="match status" value="1"/>
</dbReference>
<dbReference type="PANTHER" id="PTHR30111:SF1">
    <property type="entry name" value="33 KDA CHAPERONIN"/>
    <property type="match status" value="1"/>
</dbReference>
<dbReference type="Pfam" id="PF01430">
    <property type="entry name" value="HSP33"/>
    <property type="match status" value="1"/>
</dbReference>
<dbReference type="PIRSF" id="PIRSF005261">
    <property type="entry name" value="Heat_shock_Hsp33"/>
    <property type="match status" value="1"/>
</dbReference>
<dbReference type="SUPFAM" id="SSF64397">
    <property type="entry name" value="Hsp33 domain"/>
    <property type="match status" value="1"/>
</dbReference>
<dbReference type="SUPFAM" id="SSF118352">
    <property type="entry name" value="HSP33 redox switch-like"/>
    <property type="match status" value="1"/>
</dbReference>
<name>HSLO_BACCN</name>
<reference key="1">
    <citation type="journal article" date="2008" name="Chem. Biol. Interact.">
        <title>Extending the Bacillus cereus group genomics to putative food-borne pathogens of different toxicity.</title>
        <authorList>
            <person name="Lapidus A."/>
            <person name="Goltsman E."/>
            <person name="Auger S."/>
            <person name="Galleron N."/>
            <person name="Segurens B."/>
            <person name="Dossat C."/>
            <person name="Land M.L."/>
            <person name="Broussolle V."/>
            <person name="Brillard J."/>
            <person name="Guinebretiere M.-H."/>
            <person name="Sanchis V."/>
            <person name="Nguen-the C."/>
            <person name="Lereclus D."/>
            <person name="Richardson P."/>
            <person name="Wincker P."/>
            <person name="Weissenbach J."/>
            <person name="Ehrlich S.D."/>
            <person name="Sorokin A."/>
        </authorList>
    </citation>
    <scope>NUCLEOTIDE SEQUENCE [LARGE SCALE GENOMIC DNA]</scope>
    <source>
        <strain>DSM 22905 / CIP 110041 / 391-98 / NVH 391-98</strain>
    </source>
</reference>
<feature type="chain" id="PRO_1000076079" description="33 kDa chaperonin">
    <location>
        <begin position="1"/>
        <end position="291"/>
    </location>
</feature>
<feature type="disulfide bond" description="Redox-active" evidence="1">
    <location>
        <begin position="237"/>
        <end position="239"/>
    </location>
</feature>
<feature type="disulfide bond" description="Redox-active" evidence="1">
    <location>
        <begin position="270"/>
        <end position="273"/>
    </location>
</feature>
<accession>A7GJX9</accession>
<protein>
    <recommendedName>
        <fullName evidence="1">33 kDa chaperonin</fullName>
    </recommendedName>
    <alternativeName>
        <fullName evidence="1">Heat shock protein 33 homolog</fullName>
        <shortName evidence="1">HSP33</shortName>
    </alternativeName>
</protein>
<organism>
    <name type="scientific">Bacillus cytotoxicus (strain DSM 22905 / CIP 110041 / 391-98 / NVH 391-98)</name>
    <dbReference type="NCBI Taxonomy" id="315749"/>
    <lineage>
        <taxon>Bacteria</taxon>
        <taxon>Bacillati</taxon>
        <taxon>Bacillota</taxon>
        <taxon>Bacilli</taxon>
        <taxon>Bacillales</taxon>
        <taxon>Bacillaceae</taxon>
        <taxon>Bacillus</taxon>
        <taxon>Bacillus cereus group</taxon>
    </lineage>
</organism>
<proteinExistence type="inferred from homology"/>